<protein>
    <recommendedName>
        <fullName evidence="6">PTS system N-acetylglucosamine-specific EIIC component</fullName>
        <shortName evidence="6">PTS system GlcNAc-specific EIIC component</shortName>
    </recommendedName>
    <alternativeName>
        <fullName evidence="5">GlcNAc-specific transporter</fullName>
    </alternativeName>
    <alternativeName>
        <fullName evidence="6">N-acetylglucosamine permease IIC component</fullName>
        <shortName evidence="6">GlcNAc permease IIC component</shortName>
    </alternativeName>
</protein>
<accession>Q9S2H4</accession>
<reference key="1">
    <citation type="journal article" date="2002" name="Nature">
        <title>Complete genome sequence of the model actinomycete Streptomyces coelicolor A3(2).</title>
        <authorList>
            <person name="Bentley S.D."/>
            <person name="Chater K.F."/>
            <person name="Cerdeno-Tarraga A.-M."/>
            <person name="Challis G.L."/>
            <person name="Thomson N.R."/>
            <person name="James K.D."/>
            <person name="Harris D.E."/>
            <person name="Quail M.A."/>
            <person name="Kieser H."/>
            <person name="Harper D."/>
            <person name="Bateman A."/>
            <person name="Brown S."/>
            <person name="Chandra G."/>
            <person name="Chen C.W."/>
            <person name="Collins M."/>
            <person name="Cronin A."/>
            <person name="Fraser A."/>
            <person name="Goble A."/>
            <person name="Hidalgo J."/>
            <person name="Hornsby T."/>
            <person name="Howarth S."/>
            <person name="Huang C.-H."/>
            <person name="Kieser T."/>
            <person name="Larke L."/>
            <person name="Murphy L.D."/>
            <person name="Oliver K."/>
            <person name="O'Neil S."/>
            <person name="Rabbinowitsch E."/>
            <person name="Rajandream M.A."/>
            <person name="Rutherford K.M."/>
            <person name="Rutter S."/>
            <person name="Seeger K."/>
            <person name="Saunders D."/>
            <person name="Sharp S."/>
            <person name="Squares R."/>
            <person name="Squares S."/>
            <person name="Taylor K."/>
            <person name="Warren T."/>
            <person name="Wietzorrek A."/>
            <person name="Woodward J.R."/>
            <person name="Barrell B.G."/>
            <person name="Parkhill J."/>
            <person name="Hopwood D.A."/>
        </authorList>
    </citation>
    <scope>NUCLEOTIDE SEQUENCE [LARGE SCALE GENOMIC DNA]</scope>
    <source>
        <strain>ATCC BAA-471 / A3(2) / M145</strain>
    </source>
</reference>
<reference key="2">
    <citation type="journal article" date="2006" name="Mol. Microbiol.">
        <title>The sugar phosphotransferase system of Streptomyces coelicolor is regulated by the GntR-family regulator DasR and links N-acetylglucosamine metabolism to the control of development.</title>
        <authorList>
            <person name="Rigali S."/>
            <person name="Nothaft H."/>
            <person name="Noens E.E.E."/>
            <person name="Schlicht M."/>
            <person name="Colson S."/>
            <person name="Mueller M."/>
            <person name="Joris B."/>
            <person name="Koerten H.K."/>
            <person name="Hopwood D.A."/>
            <person name="Titgemeyer F."/>
            <person name="van Wezel G.P."/>
        </authorList>
    </citation>
    <scope>FUNCTION</scope>
    <scope>INDUCTION</scope>
    <scope>DISRUPTION PHENOTYPE</scope>
    <source>
        <strain>ATCC BAA-471 / A3(2) / M145</strain>
    </source>
</reference>
<reference key="3">
    <citation type="journal article" date="2010" name="Mol. Microbiol.">
        <title>The permease gene nagE2 is the key to N-acetylglucosamine sensing and utilization in Streptomyces coelicolor and is subject to multi-level control.</title>
        <authorList>
            <person name="Nothaft H."/>
            <person name="Rigali S."/>
            <person name="Boomsma B."/>
            <person name="Swiatek M."/>
            <person name="McDowall K.J."/>
            <person name="van Wezel G.P."/>
            <person name="Titgemeyer F."/>
        </authorList>
    </citation>
    <scope>FUNCTION</scope>
    <scope>BIOPHYSICOCHEMICAL PROPERTIES</scope>
    <scope>INDUCTION</scope>
    <scope>DISRUPTION PHENOTYPE</scope>
    <source>
        <strain>ATCC BAA-471 / A3(2) / M145</strain>
    </source>
</reference>
<name>PTWC_STRCO</name>
<feature type="chain" id="PRO_0000447882" description="PTS system N-acetylglucosamine-specific EIIC component">
    <location>
        <begin position="1"/>
        <end position="416"/>
    </location>
</feature>
<feature type="transmembrane region" description="Helical" evidence="1 2">
    <location>
        <begin position="68"/>
        <end position="88"/>
    </location>
</feature>
<feature type="transmembrane region" description="Helical" evidence="1 2">
    <location>
        <begin position="96"/>
        <end position="116"/>
    </location>
</feature>
<feature type="transmembrane region" description="Helical" evidence="1 2">
    <location>
        <begin position="130"/>
        <end position="150"/>
    </location>
</feature>
<feature type="transmembrane region" description="Helical" evidence="1 2">
    <location>
        <begin position="170"/>
        <end position="190"/>
    </location>
</feature>
<feature type="transmembrane region" description="Helical" evidence="1 2">
    <location>
        <begin position="196"/>
        <end position="216"/>
    </location>
</feature>
<feature type="transmembrane region" description="Helical" evidence="1 2">
    <location>
        <begin position="266"/>
        <end position="286"/>
    </location>
</feature>
<feature type="transmembrane region" description="Helical" evidence="1 2">
    <location>
        <begin position="298"/>
        <end position="318"/>
    </location>
</feature>
<feature type="transmembrane region" description="Helical" evidence="1 2">
    <location>
        <begin position="323"/>
        <end position="343"/>
    </location>
</feature>
<feature type="transmembrane region" description="Helical" evidence="1 2">
    <location>
        <begin position="344"/>
        <end position="364"/>
    </location>
</feature>
<feature type="transmembrane region" description="Helical" evidence="1 2">
    <location>
        <begin position="375"/>
        <end position="395"/>
    </location>
</feature>
<feature type="domain" description="PTS EIIC type-1" evidence="2">
    <location>
        <begin position="16"/>
        <end position="406"/>
    </location>
</feature>
<comment type="function">
    <text evidence="3 4">The phosphoenolpyruvate-dependent sugar phosphotransferase system (sugar PTS), a major carbohydrate active transport system, catalyzes the phosphorylation of incoming sugar substrates concomitantly with their translocation across the cell membrane. This system is involved in N-acetylglucosamine (GlcNAc) transport (PubMed:16925557, PubMed:20487300). High-affinity permease, which exhibits a narrow specificity for GlcNAc (PubMed:20487300). Essential for C-signaling between vegetative growth and development (PubMed:20487300).</text>
</comment>
<comment type="biophysicochemical properties">
    <kinetics>
        <KM evidence="4">2.6 uM for GlcNAc</KM>
        <Vmax evidence="4">0.55 nmol/min/mg enzyme</Vmax>
    </kinetics>
</comment>
<comment type="subcellular location">
    <subcellularLocation>
        <location evidence="2">Cell membrane</location>
        <topology evidence="2">Multi-pass membrane protein</topology>
    </subcellularLocation>
</comment>
<comment type="induction">
    <text evidence="3 4">Induced by GlcNAc (PubMed:20487300). Transcriptionally activated by AtrA (PubMed:20487300). Expression is repressed by DasR in the absence of glucosamine 6-P (GlcN6P) (PubMed:16925557).</text>
</comment>
<comment type="domain">
    <text evidence="2">The EIIC domain type-1 forms the PTS system translocation channel and contains the specific substrate-binding site.</text>
</comment>
<comment type="disruption phenotype">
    <text evidence="3 4">Mutant is unable to grow on GlcNAc, while growth on glucose, fructose, xylose, mannose, sucrose or galactose is not impaired (PubMed:20487300). Mutant is insensitive to GlcNAc (PubMed:16925557, PubMed:20487300).</text>
</comment>
<organism>
    <name type="scientific">Streptomyces coelicolor (strain ATCC BAA-471 / A3(2) / M145)</name>
    <dbReference type="NCBI Taxonomy" id="100226"/>
    <lineage>
        <taxon>Bacteria</taxon>
        <taxon>Bacillati</taxon>
        <taxon>Actinomycetota</taxon>
        <taxon>Actinomycetes</taxon>
        <taxon>Kitasatosporales</taxon>
        <taxon>Streptomycetaceae</taxon>
        <taxon>Streptomyces</taxon>
        <taxon>Streptomyces albidoflavus group</taxon>
    </lineage>
</organism>
<keyword id="KW-1003">Cell membrane</keyword>
<keyword id="KW-0472">Membrane</keyword>
<keyword id="KW-0598">Phosphotransferase system</keyword>
<keyword id="KW-1185">Reference proteome</keyword>
<keyword id="KW-0762">Sugar transport</keyword>
<keyword id="KW-0812">Transmembrane</keyword>
<keyword id="KW-1133">Transmembrane helix</keyword>
<keyword id="KW-0813">Transport</keyword>
<gene>
    <name evidence="5" type="primary">nagE2</name>
    <name evidence="7" type="ordered locus">SCO2907</name>
</gene>
<sequence length="416" mass="44168">MSTATDTAAPAKKRGSGLFQGLQKVGRSLQLPIAVLPAAGIMVRLGQDDIFGKDGLGWDKVAAVFNNAGGALTGSLPILFCIGVAIGFAKKADGSTALAAVVGFLVYSKVLEAFPVTEAVVQDGADVAATYNDPGVLGGIIMGLLAAVLWQRYHRKKLVDWLGFFNGRRLVPIIMAFVGIVVGVFFGLVWEPIGDGISNFGEWMTGLGSGGAALFGGVNRALIPVGMHQFVNTVAWFQLGDFTNSAGDVVHGDITRFLAGDPSAGIFQAGFFPIMMFGLPAAALAMAHTARPERRKAVLGMMISLAATSFVTGVTEPIEFSFMFIAPVLYVLHAVLTAISMAITWGLGVHAGFNFSAGFIDYALNWHLATKPWLIIPIGLVFAAIYYVTFRFAIVKFNLKTPGREPEEEVEDLTKA</sequence>
<proteinExistence type="evidence at protein level"/>
<evidence type="ECO:0000255" key="1"/>
<evidence type="ECO:0000255" key="2">
    <source>
        <dbReference type="PROSITE-ProRule" id="PRU00426"/>
    </source>
</evidence>
<evidence type="ECO:0000269" key="3">
    <source>
    </source>
</evidence>
<evidence type="ECO:0000269" key="4">
    <source>
    </source>
</evidence>
<evidence type="ECO:0000303" key="5">
    <source>
    </source>
</evidence>
<evidence type="ECO:0000305" key="6"/>
<evidence type="ECO:0000312" key="7">
    <source>
        <dbReference type="EMBL" id="CAB50988.1"/>
    </source>
</evidence>
<dbReference type="EMBL" id="AL939114">
    <property type="protein sequence ID" value="CAB50988.1"/>
    <property type="molecule type" value="Genomic_DNA"/>
</dbReference>
<dbReference type="PIR" id="T36130">
    <property type="entry name" value="T36130"/>
</dbReference>
<dbReference type="RefSeq" id="NP_627133.1">
    <property type="nucleotide sequence ID" value="NC_003888.3"/>
</dbReference>
<dbReference type="RefSeq" id="WP_011028657.1">
    <property type="nucleotide sequence ID" value="NZ_VNID01000010.1"/>
</dbReference>
<dbReference type="SMR" id="Q9S2H4"/>
<dbReference type="STRING" id="100226.gene:17760518"/>
<dbReference type="TCDB" id="4.A.1.1.20">
    <property type="family name" value="the pts glucose-glucoside (glc) family"/>
</dbReference>
<dbReference type="PaxDb" id="100226-SCO2907"/>
<dbReference type="KEGG" id="sco:SCO2907"/>
<dbReference type="PATRIC" id="fig|100226.15.peg.2966"/>
<dbReference type="eggNOG" id="COG1263">
    <property type="taxonomic scope" value="Bacteria"/>
</dbReference>
<dbReference type="HOGENOM" id="CLU_012312_1_0_11"/>
<dbReference type="InParanoid" id="Q9S2H4"/>
<dbReference type="OrthoDB" id="9797715at2"/>
<dbReference type="PhylomeDB" id="Q9S2H4"/>
<dbReference type="Proteomes" id="UP000001973">
    <property type="component" value="Chromosome"/>
</dbReference>
<dbReference type="GO" id="GO:0005886">
    <property type="term" value="C:plasma membrane"/>
    <property type="evidence" value="ECO:0000318"/>
    <property type="project" value="GO_Central"/>
</dbReference>
<dbReference type="GO" id="GO:0008982">
    <property type="term" value="F:protein-N(PI)-phosphohistidine-sugar phosphotransferase activity"/>
    <property type="evidence" value="ECO:0007669"/>
    <property type="project" value="InterPro"/>
</dbReference>
<dbReference type="GO" id="GO:0090563">
    <property type="term" value="F:protein-phosphocysteine-sugar phosphotransferase activity"/>
    <property type="evidence" value="ECO:0000318"/>
    <property type="project" value="GO_Central"/>
</dbReference>
<dbReference type="GO" id="GO:0015764">
    <property type="term" value="P:N-acetylglucosamine transport"/>
    <property type="evidence" value="ECO:0000318"/>
    <property type="project" value="GO_Central"/>
</dbReference>
<dbReference type="GO" id="GO:0009401">
    <property type="term" value="P:phosphoenolpyruvate-dependent sugar phosphotransferase system"/>
    <property type="evidence" value="ECO:0000318"/>
    <property type="project" value="GO_Central"/>
</dbReference>
<dbReference type="InterPro" id="IPR003352">
    <property type="entry name" value="PTS_EIIC"/>
</dbReference>
<dbReference type="InterPro" id="IPR013013">
    <property type="entry name" value="PTS_EIIC_1"/>
</dbReference>
<dbReference type="InterPro" id="IPR050429">
    <property type="entry name" value="PTS_Glucose_EIICBA"/>
</dbReference>
<dbReference type="PANTHER" id="PTHR30009">
    <property type="entry name" value="CYTOCHROME C-TYPE SYNTHESIS PROTEIN AND PTS TRANSMEMBRANE COMPONENT"/>
    <property type="match status" value="1"/>
</dbReference>
<dbReference type="PANTHER" id="PTHR30009:SF4">
    <property type="entry name" value="PTS SYSTEM N-ACETYLGLUCOSAMINE-SPECIFIC EIICBA COMPONENT"/>
    <property type="match status" value="1"/>
</dbReference>
<dbReference type="Pfam" id="PF02378">
    <property type="entry name" value="PTS_EIIC"/>
    <property type="match status" value="1"/>
</dbReference>
<dbReference type="PROSITE" id="PS51103">
    <property type="entry name" value="PTS_EIIC_TYPE_1"/>
    <property type="match status" value="1"/>
</dbReference>